<sequence length="227" mass="25850">MLTWTPLESNPEVLTKYIHKLGVSPAWSVTDVIGLEDDTLEWIPRPVKAFILLFPCSETYEKHRAEEHDRIKEVEEQHPEDLFYMRQFTHNACGTVALIHSVANNKEVDIDRGVLKDFLEKTASLSPEERGRALEKDEKFTADHEALAQEGQTNAANHEKVIHHFIALVNKEGTLYELDGRKSFPIKHGPTSEETFVKDAAKVCKEFMARDPNEVRFTVLALTAAQQ</sequence>
<accession>P35122</accession>
<accession>Q4PIX7</accession>
<accession>Q9TWA0</accession>
<accession>Q9V417</accession>
<protein>
    <recommendedName>
        <fullName>Ubiquitin carboxyl-terminal hydrolase</fullName>
        <ecNumber>3.4.19.12</ecNumber>
    </recommendedName>
    <alternativeName>
        <fullName>Ubiquitin thioesterase</fullName>
    </alternativeName>
</protein>
<gene>
    <name type="primary">Uch</name>
    <name type="synonym">ubc-D</name>
    <name type="ORF">CG4265</name>
</gene>
<evidence type="ECO:0000255" key="1">
    <source>
        <dbReference type="PROSITE-ProRule" id="PRU01393"/>
    </source>
</evidence>
<evidence type="ECO:0000255" key="2">
    <source>
        <dbReference type="PROSITE-ProRule" id="PRU10091"/>
    </source>
</evidence>
<evidence type="ECO:0000269" key="3">
    <source>
    </source>
</evidence>
<evidence type="ECO:0000305" key="4"/>
<dbReference type="EC" id="3.4.19.12"/>
<dbReference type="EMBL" id="S60346">
    <property type="protein sequence ID" value="AAA15411.1"/>
    <property type="molecule type" value="Genomic_DNA"/>
</dbReference>
<dbReference type="EMBL" id="X69678">
    <property type="protein sequence ID" value="CAA49358.1"/>
    <property type="molecule type" value="mRNA"/>
</dbReference>
<dbReference type="EMBL" id="X69679">
    <property type="protein sequence ID" value="CAA49359.1"/>
    <property type="molecule type" value="Genomic_DNA"/>
</dbReference>
<dbReference type="EMBL" id="AE014134">
    <property type="protein sequence ID" value="AAF51291.1"/>
    <property type="molecule type" value="Genomic_DNA"/>
</dbReference>
<dbReference type="EMBL" id="AF145600">
    <property type="protein sequence ID" value="AAD38575.1"/>
    <property type="molecule type" value="mRNA"/>
</dbReference>
<dbReference type="PIR" id="S33956">
    <property type="entry name" value="S33956"/>
</dbReference>
<dbReference type="RefSeq" id="NP_001188681.1">
    <property type="nucleotide sequence ID" value="NM_001201752.2"/>
</dbReference>
<dbReference type="RefSeq" id="NP_476940.1">
    <property type="nucleotide sequence ID" value="NM_057592.4"/>
</dbReference>
<dbReference type="SMR" id="P35122"/>
<dbReference type="BioGRID" id="59626">
    <property type="interactions" value="68"/>
</dbReference>
<dbReference type="FunCoup" id="P35122">
    <property type="interactions" value="759"/>
</dbReference>
<dbReference type="IntAct" id="P35122">
    <property type="interactions" value="178"/>
</dbReference>
<dbReference type="STRING" id="7227.FBpp0077516"/>
<dbReference type="MEROPS" id="C12.008"/>
<dbReference type="PaxDb" id="7227-FBpp0077516"/>
<dbReference type="DNASU" id="33397"/>
<dbReference type="EnsemblMetazoa" id="FBtr0077844">
    <property type="protein sequence ID" value="FBpp0077516"/>
    <property type="gene ID" value="FBgn0010288"/>
</dbReference>
<dbReference type="EnsemblMetazoa" id="FBtr0303459">
    <property type="protein sequence ID" value="FBpp0292511"/>
    <property type="gene ID" value="FBgn0010288"/>
</dbReference>
<dbReference type="GeneID" id="33397"/>
<dbReference type="KEGG" id="dme:Dmel_CG4265"/>
<dbReference type="AGR" id="FB:FBgn0010288"/>
<dbReference type="CTD" id="33397"/>
<dbReference type="FlyBase" id="FBgn0010288">
    <property type="gene designation" value="Uch"/>
</dbReference>
<dbReference type="VEuPathDB" id="VectorBase:FBgn0010288"/>
<dbReference type="eggNOG" id="KOG1415">
    <property type="taxonomic scope" value="Eukaryota"/>
</dbReference>
<dbReference type="GeneTree" id="ENSGT00940000172624"/>
<dbReference type="InParanoid" id="P35122"/>
<dbReference type="OMA" id="IDLHYVC"/>
<dbReference type="OrthoDB" id="427186at2759"/>
<dbReference type="PhylomeDB" id="P35122"/>
<dbReference type="Reactome" id="R-DME-5689603">
    <property type="pathway name" value="UCH proteinases"/>
</dbReference>
<dbReference type="Reactome" id="R-DME-8866652">
    <property type="pathway name" value="Synthesis of active ubiquitin: roles of E1 and E2 enzymes"/>
</dbReference>
<dbReference type="Reactome" id="R-DME-8951664">
    <property type="pathway name" value="Neddylation"/>
</dbReference>
<dbReference type="BioGRID-ORCS" id="33397">
    <property type="hits" value="0 hits in 3 CRISPR screens"/>
</dbReference>
<dbReference type="GenomeRNAi" id="33397"/>
<dbReference type="PRO" id="PR:P35122"/>
<dbReference type="Proteomes" id="UP000000803">
    <property type="component" value="Chromosome 2L"/>
</dbReference>
<dbReference type="Bgee" id="FBgn0010288">
    <property type="expression patterns" value="Expressed in early elongation stage spermatid (Drosophila) in testis and 156 other cell types or tissues"/>
</dbReference>
<dbReference type="ExpressionAtlas" id="P35122">
    <property type="expression patterns" value="baseline and differential"/>
</dbReference>
<dbReference type="GO" id="GO:0005737">
    <property type="term" value="C:cytoplasm"/>
    <property type="evidence" value="ECO:0000318"/>
    <property type="project" value="GO_Central"/>
</dbReference>
<dbReference type="GO" id="GO:0004843">
    <property type="term" value="F:cysteine-type deubiquitinase activity"/>
    <property type="evidence" value="ECO:0000314"/>
    <property type="project" value="FlyBase"/>
</dbReference>
<dbReference type="GO" id="GO:0045821">
    <property type="term" value="P:positive regulation of glycolytic process"/>
    <property type="evidence" value="ECO:0000316"/>
    <property type="project" value="FlyBase"/>
</dbReference>
<dbReference type="GO" id="GO:0030163">
    <property type="term" value="P:protein catabolic process"/>
    <property type="evidence" value="ECO:0000318"/>
    <property type="project" value="GO_Central"/>
</dbReference>
<dbReference type="GO" id="GO:0006511">
    <property type="term" value="P:ubiquitin-dependent protein catabolic process"/>
    <property type="evidence" value="ECO:0007669"/>
    <property type="project" value="InterPro"/>
</dbReference>
<dbReference type="CDD" id="cd09616">
    <property type="entry name" value="Peptidase_C12_UCH_L1_L3"/>
    <property type="match status" value="1"/>
</dbReference>
<dbReference type="FunFam" id="3.40.532.10:FF:000006">
    <property type="entry name" value="Ubiquitin carboxyl-terminal hydrolase"/>
    <property type="match status" value="1"/>
</dbReference>
<dbReference type="Gene3D" id="3.40.532.10">
    <property type="entry name" value="Peptidase C12, ubiquitin carboxyl-terminal hydrolase"/>
    <property type="match status" value="1"/>
</dbReference>
<dbReference type="InterPro" id="IPR038765">
    <property type="entry name" value="Papain-like_cys_pep_sf"/>
</dbReference>
<dbReference type="InterPro" id="IPR001578">
    <property type="entry name" value="Peptidase_C12_UCH"/>
</dbReference>
<dbReference type="InterPro" id="IPR036959">
    <property type="entry name" value="Peptidase_C12_UCH_sf"/>
</dbReference>
<dbReference type="InterPro" id="IPR057254">
    <property type="entry name" value="UCH_AS"/>
</dbReference>
<dbReference type="PANTHER" id="PTHR10589">
    <property type="entry name" value="UBIQUITIN CARBOXYL-TERMINAL HYDROLASE"/>
    <property type="match status" value="1"/>
</dbReference>
<dbReference type="PANTHER" id="PTHR10589:SF17">
    <property type="entry name" value="UBIQUITIN CARBOXYL-TERMINAL HYDROLASE"/>
    <property type="match status" value="1"/>
</dbReference>
<dbReference type="Pfam" id="PF01088">
    <property type="entry name" value="Peptidase_C12"/>
    <property type="match status" value="1"/>
</dbReference>
<dbReference type="PRINTS" id="PR00707">
    <property type="entry name" value="UBCTHYDRLASE"/>
</dbReference>
<dbReference type="SUPFAM" id="SSF54001">
    <property type="entry name" value="Cysteine proteinases"/>
    <property type="match status" value="1"/>
</dbReference>
<dbReference type="PROSITE" id="PS00140">
    <property type="entry name" value="UCH_1"/>
    <property type="match status" value="1"/>
</dbReference>
<dbReference type="PROSITE" id="PS52048">
    <property type="entry name" value="UCH_DOMAIN"/>
    <property type="match status" value="1"/>
</dbReference>
<proteinExistence type="evidence at transcript level"/>
<feature type="chain" id="PRO_0000211072" description="Ubiquitin carboxyl-terminal hydrolase">
    <location>
        <begin position="1"/>
        <end position="227"/>
    </location>
</feature>
<feature type="domain" description="UCH catalytic" evidence="1">
    <location>
        <begin position="3"/>
        <end position="224"/>
    </location>
</feature>
<feature type="active site" description="Nucleophile" evidence="1 2">
    <location>
        <position position="93"/>
    </location>
</feature>
<feature type="active site" description="Proton donor" evidence="1">
    <location>
        <position position="164"/>
    </location>
</feature>
<feature type="site" description="Transition state stabilizer" evidence="1">
    <location>
        <position position="87"/>
    </location>
</feature>
<feature type="site" description="Important for enzyme activity" evidence="1">
    <location>
        <position position="179"/>
    </location>
</feature>
<feature type="sequence conflict" description="In Ref. 2; AAA15411/CAA49358/CAA49359." evidence="4" ref="2">
    <original>G</original>
    <variation>A</variation>
    <location>
        <position position="22"/>
    </location>
</feature>
<feature type="sequence conflict" description="In Ref. 1 and 2." evidence="4" ref="1 2">
    <original>A</original>
    <variation>T</variation>
    <location>
        <position position="65"/>
    </location>
</feature>
<feature type="sequence conflict" description="In Ref. 1." evidence="4" ref="1">
    <original>E</original>
    <variation>G</variation>
    <location>
        <position position="107"/>
    </location>
</feature>
<organism>
    <name type="scientific">Drosophila melanogaster</name>
    <name type="common">Fruit fly</name>
    <dbReference type="NCBI Taxonomy" id="7227"/>
    <lineage>
        <taxon>Eukaryota</taxon>
        <taxon>Metazoa</taxon>
        <taxon>Ecdysozoa</taxon>
        <taxon>Arthropoda</taxon>
        <taxon>Hexapoda</taxon>
        <taxon>Insecta</taxon>
        <taxon>Pterygota</taxon>
        <taxon>Neoptera</taxon>
        <taxon>Endopterygota</taxon>
        <taxon>Diptera</taxon>
        <taxon>Brachycera</taxon>
        <taxon>Muscomorpha</taxon>
        <taxon>Ephydroidea</taxon>
        <taxon>Drosophilidae</taxon>
        <taxon>Drosophila</taxon>
        <taxon>Sophophora</taxon>
    </lineage>
</organism>
<comment type="function">
    <text evidence="3">Ubiquitin-protein hydrolase is involved both in the processing of ubiquitin precursors and of ubiquitinated proteins. This enzyme is a thiol protease that recognizes and hydrolyzes a peptide bond at the C-terminal glycine of ubiquitin.</text>
</comment>
<comment type="catalytic activity">
    <reaction>
        <text>Thiol-dependent hydrolysis of ester, thioester, amide, peptide and isopeptide bonds formed by the C-terminal Gly of ubiquitin (a 76-residue protein attached to proteins as an intracellular targeting signal).</text>
        <dbReference type="EC" id="3.4.19.12"/>
    </reaction>
</comment>
<comment type="developmental stage">
    <text evidence="3">Expressed both maternally and zygotically.</text>
</comment>
<comment type="similarity">
    <text evidence="4">Belongs to the peptidase C12 family.</text>
</comment>
<name>UCHL_DROME</name>
<keyword id="KW-0378">Hydrolase</keyword>
<keyword id="KW-0645">Protease</keyword>
<keyword id="KW-1185">Reference proteome</keyword>
<keyword id="KW-0788">Thiol protease</keyword>
<keyword id="KW-0833">Ubl conjugation pathway</keyword>
<reference key="1">
    <citation type="journal article" date="1992" name="Biochem. Soc. Trans.">
        <title>Comparisons of neuronal (PGP 9.5) and non-neuronal ubiquitin C-terminal hydrolases.</title>
        <authorList>
            <person name="Wilkinson K.D."/>
            <person name="Deshpande S."/>
            <person name="Larsen C.N."/>
        </authorList>
    </citation>
    <scope>NUCLEOTIDE SEQUENCE [GENOMIC DNA]</scope>
</reference>
<reference key="2">
    <citation type="journal article" date="1993" name="Dev. Biol.">
        <title>Cloning and analysis of expression of a ubiquitin carboxyl terminal hydrolase expressed during oogenesis in Drosophila melanogaster.</title>
        <authorList>
            <person name="Zhang N."/>
            <person name="Wilkinson K."/>
            <person name="Bownes M."/>
        </authorList>
    </citation>
    <scope>NUCLEOTIDE SEQUENCE [GENOMIC DNA / MRNA]</scope>
    <scope>FUNCTION</scope>
    <scope>DEVELOPMENTAL STAGE</scope>
    <source>
        <strain>Oregon-R</strain>
    </source>
</reference>
<reference key="3">
    <citation type="journal article" date="2000" name="Science">
        <title>The genome sequence of Drosophila melanogaster.</title>
        <authorList>
            <person name="Adams M.D."/>
            <person name="Celniker S.E."/>
            <person name="Holt R.A."/>
            <person name="Evans C.A."/>
            <person name="Gocayne J.D."/>
            <person name="Amanatides P.G."/>
            <person name="Scherer S.E."/>
            <person name="Li P.W."/>
            <person name="Hoskins R.A."/>
            <person name="Galle R.F."/>
            <person name="George R.A."/>
            <person name="Lewis S.E."/>
            <person name="Richards S."/>
            <person name="Ashburner M."/>
            <person name="Henderson S.N."/>
            <person name="Sutton G.G."/>
            <person name="Wortman J.R."/>
            <person name="Yandell M.D."/>
            <person name="Zhang Q."/>
            <person name="Chen L.X."/>
            <person name="Brandon R.C."/>
            <person name="Rogers Y.-H.C."/>
            <person name="Blazej R.G."/>
            <person name="Champe M."/>
            <person name="Pfeiffer B.D."/>
            <person name="Wan K.H."/>
            <person name="Doyle C."/>
            <person name="Baxter E.G."/>
            <person name="Helt G."/>
            <person name="Nelson C.R."/>
            <person name="Miklos G.L.G."/>
            <person name="Abril J.F."/>
            <person name="Agbayani A."/>
            <person name="An H.-J."/>
            <person name="Andrews-Pfannkoch C."/>
            <person name="Baldwin D."/>
            <person name="Ballew R.M."/>
            <person name="Basu A."/>
            <person name="Baxendale J."/>
            <person name="Bayraktaroglu L."/>
            <person name="Beasley E.M."/>
            <person name="Beeson K.Y."/>
            <person name="Benos P.V."/>
            <person name="Berman B.P."/>
            <person name="Bhandari D."/>
            <person name="Bolshakov S."/>
            <person name="Borkova D."/>
            <person name="Botchan M.R."/>
            <person name="Bouck J."/>
            <person name="Brokstein P."/>
            <person name="Brottier P."/>
            <person name="Burtis K.C."/>
            <person name="Busam D.A."/>
            <person name="Butler H."/>
            <person name="Cadieu E."/>
            <person name="Center A."/>
            <person name="Chandra I."/>
            <person name="Cherry J.M."/>
            <person name="Cawley S."/>
            <person name="Dahlke C."/>
            <person name="Davenport L.B."/>
            <person name="Davies P."/>
            <person name="de Pablos B."/>
            <person name="Delcher A."/>
            <person name="Deng Z."/>
            <person name="Mays A.D."/>
            <person name="Dew I."/>
            <person name="Dietz S.M."/>
            <person name="Dodson K."/>
            <person name="Doup L.E."/>
            <person name="Downes M."/>
            <person name="Dugan-Rocha S."/>
            <person name="Dunkov B.C."/>
            <person name="Dunn P."/>
            <person name="Durbin K.J."/>
            <person name="Evangelista C.C."/>
            <person name="Ferraz C."/>
            <person name="Ferriera S."/>
            <person name="Fleischmann W."/>
            <person name="Fosler C."/>
            <person name="Gabrielian A.E."/>
            <person name="Garg N.S."/>
            <person name="Gelbart W.M."/>
            <person name="Glasser K."/>
            <person name="Glodek A."/>
            <person name="Gong F."/>
            <person name="Gorrell J.H."/>
            <person name="Gu Z."/>
            <person name="Guan P."/>
            <person name="Harris M."/>
            <person name="Harris N.L."/>
            <person name="Harvey D.A."/>
            <person name="Heiman T.J."/>
            <person name="Hernandez J.R."/>
            <person name="Houck J."/>
            <person name="Hostin D."/>
            <person name="Houston K.A."/>
            <person name="Howland T.J."/>
            <person name="Wei M.-H."/>
            <person name="Ibegwam C."/>
            <person name="Jalali M."/>
            <person name="Kalush F."/>
            <person name="Karpen G.H."/>
            <person name="Ke Z."/>
            <person name="Kennison J.A."/>
            <person name="Ketchum K.A."/>
            <person name="Kimmel B.E."/>
            <person name="Kodira C.D."/>
            <person name="Kraft C.L."/>
            <person name="Kravitz S."/>
            <person name="Kulp D."/>
            <person name="Lai Z."/>
            <person name="Lasko P."/>
            <person name="Lei Y."/>
            <person name="Levitsky A.A."/>
            <person name="Li J.H."/>
            <person name="Li Z."/>
            <person name="Liang Y."/>
            <person name="Lin X."/>
            <person name="Liu X."/>
            <person name="Mattei B."/>
            <person name="McIntosh T.C."/>
            <person name="McLeod M.P."/>
            <person name="McPherson D."/>
            <person name="Merkulov G."/>
            <person name="Milshina N.V."/>
            <person name="Mobarry C."/>
            <person name="Morris J."/>
            <person name="Moshrefi A."/>
            <person name="Mount S.M."/>
            <person name="Moy M."/>
            <person name="Murphy B."/>
            <person name="Murphy L."/>
            <person name="Muzny D.M."/>
            <person name="Nelson D.L."/>
            <person name="Nelson D.R."/>
            <person name="Nelson K.A."/>
            <person name="Nixon K."/>
            <person name="Nusskern D.R."/>
            <person name="Pacleb J.M."/>
            <person name="Palazzolo M."/>
            <person name="Pittman G.S."/>
            <person name="Pan S."/>
            <person name="Pollard J."/>
            <person name="Puri V."/>
            <person name="Reese M.G."/>
            <person name="Reinert K."/>
            <person name="Remington K."/>
            <person name="Saunders R.D.C."/>
            <person name="Scheeler F."/>
            <person name="Shen H."/>
            <person name="Shue B.C."/>
            <person name="Siden-Kiamos I."/>
            <person name="Simpson M."/>
            <person name="Skupski M.P."/>
            <person name="Smith T.J."/>
            <person name="Spier E."/>
            <person name="Spradling A.C."/>
            <person name="Stapleton M."/>
            <person name="Strong R."/>
            <person name="Sun E."/>
            <person name="Svirskas R."/>
            <person name="Tector C."/>
            <person name="Turner R."/>
            <person name="Venter E."/>
            <person name="Wang A.H."/>
            <person name="Wang X."/>
            <person name="Wang Z.-Y."/>
            <person name="Wassarman D.A."/>
            <person name="Weinstock G.M."/>
            <person name="Weissenbach J."/>
            <person name="Williams S.M."/>
            <person name="Woodage T."/>
            <person name="Worley K.C."/>
            <person name="Wu D."/>
            <person name="Yang S."/>
            <person name="Yao Q.A."/>
            <person name="Ye J."/>
            <person name="Yeh R.-F."/>
            <person name="Zaveri J.S."/>
            <person name="Zhan M."/>
            <person name="Zhang G."/>
            <person name="Zhao Q."/>
            <person name="Zheng L."/>
            <person name="Zheng X.H."/>
            <person name="Zhong F.N."/>
            <person name="Zhong W."/>
            <person name="Zhou X."/>
            <person name="Zhu S.C."/>
            <person name="Zhu X."/>
            <person name="Smith H.O."/>
            <person name="Gibbs R.A."/>
            <person name="Myers E.W."/>
            <person name="Rubin G.M."/>
            <person name="Venter J.C."/>
        </authorList>
    </citation>
    <scope>NUCLEOTIDE SEQUENCE [LARGE SCALE GENOMIC DNA]</scope>
    <source>
        <strain>Berkeley</strain>
    </source>
</reference>
<reference key="4">
    <citation type="journal article" date="2002" name="Genome Biol.">
        <title>Annotation of the Drosophila melanogaster euchromatic genome: a systematic review.</title>
        <authorList>
            <person name="Misra S."/>
            <person name="Crosby M.A."/>
            <person name="Mungall C.J."/>
            <person name="Matthews B.B."/>
            <person name="Campbell K.S."/>
            <person name="Hradecky P."/>
            <person name="Huang Y."/>
            <person name="Kaminker J.S."/>
            <person name="Millburn G.H."/>
            <person name="Prochnik S.E."/>
            <person name="Smith C.D."/>
            <person name="Tupy J.L."/>
            <person name="Whitfield E.J."/>
            <person name="Bayraktaroglu L."/>
            <person name="Berman B.P."/>
            <person name="Bettencourt B.R."/>
            <person name="Celniker S.E."/>
            <person name="de Grey A.D.N.J."/>
            <person name="Drysdale R.A."/>
            <person name="Harris N.L."/>
            <person name="Richter J."/>
            <person name="Russo S."/>
            <person name="Schroeder A.J."/>
            <person name="Shu S.Q."/>
            <person name="Stapleton M."/>
            <person name="Yamada C."/>
            <person name="Ashburner M."/>
            <person name="Gelbart W.M."/>
            <person name="Rubin G.M."/>
            <person name="Lewis S.E."/>
        </authorList>
    </citation>
    <scope>GENOME REANNOTATION</scope>
    <source>
        <strain>Berkeley</strain>
    </source>
</reference>
<reference key="5">
    <citation type="journal article" date="2000" name="Science">
        <title>A Drosophila complementary DNA resource.</title>
        <authorList>
            <person name="Rubin G.M."/>
            <person name="Hong L."/>
            <person name="Brokstein P."/>
            <person name="Evans-Holm M."/>
            <person name="Frise E."/>
            <person name="Stapleton M."/>
            <person name="Harvey D.A."/>
        </authorList>
    </citation>
    <scope>NUCLEOTIDE SEQUENCE [LARGE SCALE MRNA]</scope>
    <source>
        <strain>Berkeley</strain>
        <tissue>Head</tissue>
    </source>
</reference>